<protein>
    <recommendedName>
        <fullName evidence="1">ATP synthase subunit beta</fullName>
        <ecNumber evidence="1">7.1.2.2</ecNumber>
    </recommendedName>
    <alternativeName>
        <fullName evidence="1">ATP synthase F1 sector subunit beta</fullName>
    </alternativeName>
    <alternativeName>
        <fullName evidence="1">F-ATPase subunit beta</fullName>
    </alternativeName>
</protein>
<keyword id="KW-0066">ATP synthesis</keyword>
<keyword id="KW-0067">ATP-binding</keyword>
<keyword id="KW-1003">Cell membrane</keyword>
<keyword id="KW-0139">CF(1)</keyword>
<keyword id="KW-0375">Hydrogen ion transport</keyword>
<keyword id="KW-0406">Ion transport</keyword>
<keyword id="KW-0472">Membrane</keyword>
<keyword id="KW-0547">Nucleotide-binding</keyword>
<keyword id="KW-1278">Translocase</keyword>
<keyword id="KW-0813">Transport</keyword>
<proteinExistence type="inferred from homology"/>
<feature type="chain" id="PRO_0000254401" description="ATP synthase subunit beta">
    <location>
        <begin position="1"/>
        <end position="468"/>
    </location>
</feature>
<feature type="binding site" evidence="1">
    <location>
        <begin position="155"/>
        <end position="162"/>
    </location>
    <ligand>
        <name>ATP</name>
        <dbReference type="ChEBI" id="CHEBI:30616"/>
    </ligand>
</feature>
<sequence length="468" mass="50867">MSSGKIAQVVGPVVDVAFATGDKLPEINNALVVYTDEEKSRRIVLEVALELGEGVVRTIAMESTDGLTRGLEVLDTGRPISVPVGKETLGRVFNVLGDTIDMEAPFADDAEREPIHKKAPTFDELSTSTEILETGIKVIDLLAPYLKGGKVGLFGGAGVGKTVLIQELIHNIAQEHGGISVFTGVGERSREGNDLYWEMKESGVIEKTAMVFGQMNEPPGARMRVALTGLTIAEYFRDVEGQDVLLFIDNIFRFTQAGSEVSALLGRMPSAVGYQPTLATEMGQLQERITSTKKGSVTSIQAIYVPADDYTDPAPATAFAHLDSTTNLERKLTQMGIYPAVDPLASSSRALSPEIVGEEHYAVATEVQRVLQRYRELQDIIAILGMDELSDEDKTLVGRARRIQFFLSQNFNVAEQFTGQPGSYVPVAETVRGFKEILEGKYDNLPEDAFRSVGPIEDVVAKAKAMGY</sequence>
<accession>Q5M104</accession>
<organism>
    <name type="scientific">Streptococcus thermophilus (strain CNRZ 1066)</name>
    <dbReference type="NCBI Taxonomy" id="299768"/>
    <lineage>
        <taxon>Bacteria</taxon>
        <taxon>Bacillati</taxon>
        <taxon>Bacillota</taxon>
        <taxon>Bacilli</taxon>
        <taxon>Lactobacillales</taxon>
        <taxon>Streptococcaceae</taxon>
        <taxon>Streptococcus</taxon>
    </lineage>
</organism>
<reference key="1">
    <citation type="journal article" date="2004" name="Nat. Biotechnol.">
        <title>Complete sequence and comparative genome analysis of the dairy bacterium Streptococcus thermophilus.</title>
        <authorList>
            <person name="Bolotin A."/>
            <person name="Quinquis B."/>
            <person name="Renault P."/>
            <person name="Sorokin A."/>
            <person name="Ehrlich S.D."/>
            <person name="Kulakauskas S."/>
            <person name="Lapidus A."/>
            <person name="Goltsman E."/>
            <person name="Mazur M."/>
            <person name="Pusch G.D."/>
            <person name="Fonstein M."/>
            <person name="Overbeek R."/>
            <person name="Kyprides N."/>
            <person name="Purnelle B."/>
            <person name="Prozzi D."/>
            <person name="Ngui K."/>
            <person name="Masuy D."/>
            <person name="Hancy F."/>
            <person name="Burteau S."/>
            <person name="Boutry M."/>
            <person name="Delcour J."/>
            <person name="Goffeau A."/>
            <person name="Hols P."/>
        </authorList>
    </citation>
    <scope>NUCLEOTIDE SEQUENCE [LARGE SCALE GENOMIC DNA]</scope>
    <source>
        <strain>CNRZ 1066</strain>
    </source>
</reference>
<comment type="function">
    <text evidence="1">Produces ATP from ADP in the presence of a proton gradient across the membrane. The catalytic sites are hosted primarily by the beta subunits.</text>
</comment>
<comment type="catalytic activity">
    <reaction evidence="1">
        <text>ATP + H2O + 4 H(+)(in) = ADP + phosphate + 5 H(+)(out)</text>
        <dbReference type="Rhea" id="RHEA:57720"/>
        <dbReference type="ChEBI" id="CHEBI:15377"/>
        <dbReference type="ChEBI" id="CHEBI:15378"/>
        <dbReference type="ChEBI" id="CHEBI:30616"/>
        <dbReference type="ChEBI" id="CHEBI:43474"/>
        <dbReference type="ChEBI" id="CHEBI:456216"/>
        <dbReference type="EC" id="7.1.2.2"/>
    </reaction>
</comment>
<comment type="subunit">
    <text evidence="1">F-type ATPases have 2 components, CF(1) - the catalytic core - and CF(0) - the membrane proton channel. CF(1) has five subunits: alpha(3), beta(3), gamma(1), delta(1), epsilon(1). CF(0) has three main subunits: a(1), b(2) and c(9-12). The alpha and beta chains form an alternating ring which encloses part of the gamma chain. CF(1) is attached to CF(0) by a central stalk formed by the gamma and epsilon chains, while a peripheral stalk is formed by the delta and b chains.</text>
</comment>
<comment type="subcellular location">
    <subcellularLocation>
        <location evidence="1">Cell membrane</location>
        <topology evidence="1">Peripheral membrane protein</topology>
    </subcellularLocation>
</comment>
<comment type="similarity">
    <text evidence="1">Belongs to the ATPase alpha/beta chains family.</text>
</comment>
<dbReference type="EC" id="7.1.2.2" evidence="1"/>
<dbReference type="EMBL" id="CP000024">
    <property type="protein sequence ID" value="AAV62083.1"/>
    <property type="molecule type" value="Genomic_DNA"/>
</dbReference>
<dbReference type="RefSeq" id="WP_011226937.1">
    <property type="nucleotide sequence ID" value="NC_006449.1"/>
</dbReference>
<dbReference type="SMR" id="Q5M104"/>
<dbReference type="GeneID" id="66898394"/>
<dbReference type="KEGG" id="stc:str0484"/>
<dbReference type="HOGENOM" id="CLU_022398_0_2_9"/>
<dbReference type="GO" id="GO:0005886">
    <property type="term" value="C:plasma membrane"/>
    <property type="evidence" value="ECO:0007669"/>
    <property type="project" value="UniProtKB-SubCell"/>
</dbReference>
<dbReference type="GO" id="GO:0045259">
    <property type="term" value="C:proton-transporting ATP synthase complex"/>
    <property type="evidence" value="ECO:0007669"/>
    <property type="project" value="UniProtKB-KW"/>
</dbReference>
<dbReference type="GO" id="GO:0005524">
    <property type="term" value="F:ATP binding"/>
    <property type="evidence" value="ECO:0007669"/>
    <property type="project" value="UniProtKB-UniRule"/>
</dbReference>
<dbReference type="GO" id="GO:0016887">
    <property type="term" value="F:ATP hydrolysis activity"/>
    <property type="evidence" value="ECO:0007669"/>
    <property type="project" value="InterPro"/>
</dbReference>
<dbReference type="GO" id="GO:0046933">
    <property type="term" value="F:proton-transporting ATP synthase activity, rotational mechanism"/>
    <property type="evidence" value="ECO:0007669"/>
    <property type="project" value="UniProtKB-UniRule"/>
</dbReference>
<dbReference type="CDD" id="cd18110">
    <property type="entry name" value="ATP-synt_F1_beta_C"/>
    <property type="match status" value="1"/>
</dbReference>
<dbReference type="CDD" id="cd18115">
    <property type="entry name" value="ATP-synt_F1_beta_N"/>
    <property type="match status" value="1"/>
</dbReference>
<dbReference type="CDD" id="cd01133">
    <property type="entry name" value="F1-ATPase_beta_CD"/>
    <property type="match status" value="1"/>
</dbReference>
<dbReference type="FunFam" id="1.10.1140.10:FF:000001">
    <property type="entry name" value="ATP synthase subunit beta"/>
    <property type="match status" value="1"/>
</dbReference>
<dbReference type="FunFam" id="2.40.10.170:FF:000005">
    <property type="entry name" value="ATP synthase subunit beta"/>
    <property type="match status" value="1"/>
</dbReference>
<dbReference type="FunFam" id="3.40.50.300:FF:000004">
    <property type="entry name" value="ATP synthase subunit beta"/>
    <property type="match status" value="1"/>
</dbReference>
<dbReference type="Gene3D" id="2.40.10.170">
    <property type="match status" value="1"/>
</dbReference>
<dbReference type="Gene3D" id="1.10.1140.10">
    <property type="entry name" value="Bovine Mitochondrial F1-atpase, Atp Synthase Beta Chain, Chain D, domain 3"/>
    <property type="match status" value="1"/>
</dbReference>
<dbReference type="Gene3D" id="3.40.50.300">
    <property type="entry name" value="P-loop containing nucleotide triphosphate hydrolases"/>
    <property type="match status" value="1"/>
</dbReference>
<dbReference type="HAMAP" id="MF_01347">
    <property type="entry name" value="ATP_synth_beta_bact"/>
    <property type="match status" value="1"/>
</dbReference>
<dbReference type="InterPro" id="IPR003593">
    <property type="entry name" value="AAA+_ATPase"/>
</dbReference>
<dbReference type="InterPro" id="IPR055190">
    <property type="entry name" value="ATP-synt_VA_C"/>
</dbReference>
<dbReference type="InterPro" id="IPR005722">
    <property type="entry name" value="ATP_synth_F1_bsu"/>
</dbReference>
<dbReference type="InterPro" id="IPR020003">
    <property type="entry name" value="ATPase_a/bsu_AS"/>
</dbReference>
<dbReference type="InterPro" id="IPR050053">
    <property type="entry name" value="ATPase_alpha/beta_chains"/>
</dbReference>
<dbReference type="InterPro" id="IPR004100">
    <property type="entry name" value="ATPase_F1/V1/A1_a/bsu_N"/>
</dbReference>
<dbReference type="InterPro" id="IPR036121">
    <property type="entry name" value="ATPase_F1/V1/A1_a/bsu_N_sf"/>
</dbReference>
<dbReference type="InterPro" id="IPR000194">
    <property type="entry name" value="ATPase_F1/V1/A1_a/bsu_nucl-bd"/>
</dbReference>
<dbReference type="InterPro" id="IPR024034">
    <property type="entry name" value="ATPase_F1/V1_b/a_C"/>
</dbReference>
<dbReference type="InterPro" id="IPR027417">
    <property type="entry name" value="P-loop_NTPase"/>
</dbReference>
<dbReference type="NCBIfam" id="TIGR01039">
    <property type="entry name" value="atpD"/>
    <property type="match status" value="1"/>
</dbReference>
<dbReference type="PANTHER" id="PTHR15184">
    <property type="entry name" value="ATP SYNTHASE"/>
    <property type="match status" value="1"/>
</dbReference>
<dbReference type="PANTHER" id="PTHR15184:SF71">
    <property type="entry name" value="ATP SYNTHASE SUBUNIT BETA, MITOCHONDRIAL"/>
    <property type="match status" value="1"/>
</dbReference>
<dbReference type="Pfam" id="PF00006">
    <property type="entry name" value="ATP-synt_ab"/>
    <property type="match status" value="1"/>
</dbReference>
<dbReference type="Pfam" id="PF02874">
    <property type="entry name" value="ATP-synt_ab_N"/>
    <property type="match status" value="1"/>
</dbReference>
<dbReference type="Pfam" id="PF22919">
    <property type="entry name" value="ATP-synt_VA_C"/>
    <property type="match status" value="1"/>
</dbReference>
<dbReference type="SMART" id="SM00382">
    <property type="entry name" value="AAA"/>
    <property type="match status" value="1"/>
</dbReference>
<dbReference type="SUPFAM" id="SSF47917">
    <property type="entry name" value="C-terminal domain of alpha and beta subunits of F1 ATP synthase"/>
    <property type="match status" value="1"/>
</dbReference>
<dbReference type="SUPFAM" id="SSF50615">
    <property type="entry name" value="N-terminal domain of alpha and beta subunits of F1 ATP synthase"/>
    <property type="match status" value="1"/>
</dbReference>
<dbReference type="SUPFAM" id="SSF52540">
    <property type="entry name" value="P-loop containing nucleoside triphosphate hydrolases"/>
    <property type="match status" value="1"/>
</dbReference>
<dbReference type="PROSITE" id="PS00152">
    <property type="entry name" value="ATPASE_ALPHA_BETA"/>
    <property type="match status" value="1"/>
</dbReference>
<name>ATPB_STRT1</name>
<gene>
    <name evidence="1" type="primary">atpD</name>
    <name type="ordered locus">str0484</name>
</gene>
<evidence type="ECO:0000255" key="1">
    <source>
        <dbReference type="HAMAP-Rule" id="MF_01347"/>
    </source>
</evidence>